<sequence length="363" mass="41871">MNILQEPIDFLKKEELKNIDLSQMSKKERYKIWKRIPKCELHCHLDLCFSADFFVSCIRKYNLQPNLSDEEVLDYYLFAKGGKSLGEFVEKAIKVADIFHDYEVIEDLAKHAVFNKYKEGVVLMEFRYSPTFVAFKYNLDIELIHQAIVKGIKEVVELLDHKIHVALMCIGDTGHEAANIKASADFCLKHKADFVGFDHGGHEVDLKEYKEIFDYVRESGVPLSVHAGEDVTLPNLNTLYSAIQVLKVERIGHGIRVAESQELIDMVKEKNILLEVCPISNVLLKNAKSMDTHPIRQLYDAGVKVSVNSDDPGMFLTNINDDYEELYTHLNFTLEDFMKMNEWALEKSFMDSNIKDKIKNLYF</sequence>
<keyword id="KW-0002">3D-structure</keyword>
<keyword id="KW-0378">Hydrolase</keyword>
<keyword id="KW-0479">Metal-binding</keyword>
<keyword id="KW-0660">Purine salvage</keyword>
<keyword id="KW-1185">Reference proteome</keyword>
<keyword id="KW-0862">Zinc</keyword>
<dbReference type="EC" id="3.5.4.4" evidence="2"/>
<dbReference type="EC" id="3.5.4.31" evidence="2"/>
<dbReference type="EMBL" id="AAKM01002769">
    <property type="protein sequence ID" value="EDL42450.1"/>
    <property type="molecule type" value="Genomic_DNA"/>
</dbReference>
<dbReference type="RefSeq" id="XP_001608474.1">
    <property type="nucleotide sequence ID" value="XM_001608424.1"/>
</dbReference>
<dbReference type="PDB" id="2PGF">
    <property type="method" value="X-ray"/>
    <property type="resolution" value="1.89 A"/>
    <property type="chains" value="A=1-363"/>
</dbReference>
<dbReference type="PDB" id="2PGR">
    <property type="method" value="X-ray"/>
    <property type="resolution" value="2.30 A"/>
    <property type="chains" value="A=1-363"/>
</dbReference>
<dbReference type="PDB" id="2QVN">
    <property type="method" value="X-ray"/>
    <property type="resolution" value="2.19 A"/>
    <property type="chains" value="A=1-363"/>
</dbReference>
<dbReference type="PDB" id="3EWC">
    <property type="method" value="X-ray"/>
    <property type="resolution" value="2.11 A"/>
    <property type="chains" value="A=1-363"/>
</dbReference>
<dbReference type="PDB" id="3EWD">
    <property type="method" value="X-ray"/>
    <property type="resolution" value="1.90 A"/>
    <property type="chains" value="A=1-363"/>
</dbReference>
<dbReference type="PDBsum" id="2PGF"/>
<dbReference type="PDBsum" id="2PGR"/>
<dbReference type="PDBsum" id="2QVN"/>
<dbReference type="PDBsum" id="3EWC"/>
<dbReference type="PDBsum" id="3EWD"/>
<dbReference type="SMR" id="A5KE01"/>
<dbReference type="FunCoup" id="A5KE01">
    <property type="interactions" value="47"/>
</dbReference>
<dbReference type="STRING" id="126793.A5KE01"/>
<dbReference type="EnsemblProtists" id="EDL42450">
    <property type="protein sequence ID" value="EDL42450"/>
    <property type="gene ID" value="PVX_111245"/>
</dbReference>
<dbReference type="GeneID" id="5471345"/>
<dbReference type="KEGG" id="pvx:PVX_111245"/>
<dbReference type="VEuPathDB" id="PlasmoDB:PVX_111245"/>
<dbReference type="InParanoid" id="A5KE01"/>
<dbReference type="OMA" id="NHFTIHA"/>
<dbReference type="PhylomeDB" id="A5KE01"/>
<dbReference type="UniPathway" id="UPA00606"/>
<dbReference type="EvolutionaryTrace" id="A5KE01"/>
<dbReference type="Proteomes" id="UP000008333">
    <property type="component" value="Chromosome 6"/>
</dbReference>
<dbReference type="GO" id="GO:0005829">
    <property type="term" value="C:cytosol"/>
    <property type="evidence" value="ECO:0007669"/>
    <property type="project" value="TreeGrafter"/>
</dbReference>
<dbReference type="GO" id="GO:0009897">
    <property type="term" value="C:external side of plasma membrane"/>
    <property type="evidence" value="ECO:0007669"/>
    <property type="project" value="TreeGrafter"/>
</dbReference>
<dbReference type="GO" id="GO:0090614">
    <property type="term" value="F:5'-methylthioadenosine deaminase activity"/>
    <property type="evidence" value="ECO:0000314"/>
    <property type="project" value="UniProtKB"/>
</dbReference>
<dbReference type="GO" id="GO:0004000">
    <property type="term" value="F:adenosine deaminase activity"/>
    <property type="evidence" value="ECO:0000314"/>
    <property type="project" value="UniProtKB"/>
</dbReference>
<dbReference type="GO" id="GO:0046872">
    <property type="term" value="F:metal ion binding"/>
    <property type="evidence" value="ECO:0007669"/>
    <property type="project" value="UniProtKB-KW"/>
</dbReference>
<dbReference type="GO" id="GO:0006154">
    <property type="term" value="P:adenosine catabolic process"/>
    <property type="evidence" value="ECO:0007669"/>
    <property type="project" value="TreeGrafter"/>
</dbReference>
<dbReference type="GO" id="GO:0043103">
    <property type="term" value="P:hypoxanthine salvage"/>
    <property type="evidence" value="ECO:0007669"/>
    <property type="project" value="TreeGrafter"/>
</dbReference>
<dbReference type="GO" id="GO:0046103">
    <property type="term" value="P:inosine biosynthetic process"/>
    <property type="evidence" value="ECO:0007669"/>
    <property type="project" value="TreeGrafter"/>
</dbReference>
<dbReference type="GO" id="GO:0060169">
    <property type="term" value="P:negative regulation of adenosine receptor signaling pathway"/>
    <property type="evidence" value="ECO:0007669"/>
    <property type="project" value="TreeGrafter"/>
</dbReference>
<dbReference type="GO" id="GO:0009168">
    <property type="term" value="P:purine ribonucleoside monophosphate biosynthetic process"/>
    <property type="evidence" value="ECO:0007669"/>
    <property type="project" value="InterPro"/>
</dbReference>
<dbReference type="GO" id="GO:0006166">
    <property type="term" value="P:purine ribonucleoside salvage"/>
    <property type="evidence" value="ECO:0007669"/>
    <property type="project" value="UniProtKB-KW"/>
</dbReference>
<dbReference type="Gene3D" id="3.20.20.140">
    <property type="entry name" value="Metal-dependent hydrolases"/>
    <property type="match status" value="1"/>
</dbReference>
<dbReference type="InterPro" id="IPR006650">
    <property type="entry name" value="A/AMP_deam_AS"/>
</dbReference>
<dbReference type="InterPro" id="IPR001365">
    <property type="entry name" value="A_deaminase_dom"/>
</dbReference>
<dbReference type="InterPro" id="IPR006330">
    <property type="entry name" value="Ado/ade_deaminase"/>
</dbReference>
<dbReference type="InterPro" id="IPR032466">
    <property type="entry name" value="Metal_Hydrolase"/>
</dbReference>
<dbReference type="PANTHER" id="PTHR11409">
    <property type="entry name" value="ADENOSINE DEAMINASE"/>
    <property type="match status" value="1"/>
</dbReference>
<dbReference type="PANTHER" id="PTHR11409:SF43">
    <property type="entry name" value="ADENOSINE DEAMINASE"/>
    <property type="match status" value="1"/>
</dbReference>
<dbReference type="Pfam" id="PF00962">
    <property type="entry name" value="A_deaminase"/>
    <property type="match status" value="1"/>
</dbReference>
<dbReference type="SUPFAM" id="SSF51556">
    <property type="entry name" value="Metallo-dependent hydrolases"/>
    <property type="match status" value="1"/>
</dbReference>
<dbReference type="PROSITE" id="PS00485">
    <property type="entry name" value="A_DEAMINASE"/>
    <property type="match status" value="1"/>
</dbReference>
<name>ADA_PLAVS</name>
<gene>
    <name evidence="3" type="primary">ADA</name>
    <name evidence="6" type="ORF">PVX_111245</name>
</gene>
<evidence type="ECO:0000269" key="1">
    <source>
    </source>
</evidence>
<evidence type="ECO:0000269" key="2">
    <source>
    </source>
</evidence>
<evidence type="ECO:0000305" key="3"/>
<evidence type="ECO:0000305" key="4">
    <source>
    </source>
</evidence>
<evidence type="ECO:0000305" key="5">
    <source>
    </source>
</evidence>
<evidence type="ECO:0000312" key="6">
    <source>
        <dbReference type="EMBL" id="EDL42450.1"/>
    </source>
</evidence>
<evidence type="ECO:0000312" key="7">
    <source>
        <dbReference type="Proteomes" id="UP000008333"/>
    </source>
</evidence>
<evidence type="ECO:0007744" key="8">
    <source>
        <dbReference type="PDB" id="2PGF"/>
    </source>
</evidence>
<evidence type="ECO:0007744" key="9">
    <source>
        <dbReference type="PDB" id="2PGR"/>
    </source>
</evidence>
<evidence type="ECO:0007744" key="10">
    <source>
        <dbReference type="PDB" id="2QVN"/>
    </source>
</evidence>
<evidence type="ECO:0007744" key="11">
    <source>
        <dbReference type="PDB" id="3EWC"/>
    </source>
</evidence>
<evidence type="ECO:0007744" key="12">
    <source>
        <dbReference type="PDB" id="3EWD"/>
    </source>
</evidence>
<evidence type="ECO:0007829" key="13">
    <source>
        <dbReference type="PDB" id="2PGF"/>
    </source>
</evidence>
<organism evidence="7">
    <name type="scientific">Plasmodium vivax (strain Salvador I)</name>
    <dbReference type="NCBI Taxonomy" id="126793"/>
    <lineage>
        <taxon>Eukaryota</taxon>
        <taxon>Sar</taxon>
        <taxon>Alveolata</taxon>
        <taxon>Apicomplexa</taxon>
        <taxon>Aconoidasida</taxon>
        <taxon>Haemosporida</taxon>
        <taxon>Plasmodiidae</taxon>
        <taxon>Plasmodium</taxon>
        <taxon>Plasmodium (Plasmodium)</taxon>
    </lineage>
</organism>
<proteinExistence type="evidence at protein level"/>
<feature type="chain" id="PRO_0000451865" description="Adenosine deaminase">
    <location>
        <begin position="1"/>
        <end position="363"/>
    </location>
</feature>
<feature type="region of interest" description="Gating helix loop; regulates binding affinity for substrates and thus substrate selectivity" evidence="4">
    <location>
        <begin position="170"/>
        <end position="184"/>
    </location>
</feature>
<feature type="binding site" evidence="1 2 8 9 11 12">
    <location>
        <position position="42"/>
    </location>
    <ligand>
        <name>Zn(2+)</name>
        <dbReference type="ChEBI" id="CHEBI:29105"/>
        <note>catalytic</note>
    </ligand>
</feature>
<feature type="binding site" evidence="1 8 9 10">
    <location>
        <begin position="44"/>
        <end position="46"/>
    </location>
    <ligand>
        <name>a purine D-ribonucleoside</name>
        <dbReference type="ChEBI" id="CHEBI:142355"/>
    </ligand>
</feature>
<feature type="binding site" evidence="1 2 8 9 11 12">
    <location>
        <position position="44"/>
    </location>
    <ligand>
        <name>Zn(2+)</name>
        <dbReference type="ChEBI" id="CHEBI:29105"/>
        <note>catalytic</note>
    </ligand>
</feature>
<feature type="binding site" evidence="1 2 8 9 10 11">
    <location>
        <position position="172"/>
    </location>
    <ligand>
        <name>a purine D-ribonucleoside</name>
        <dbReference type="ChEBI" id="CHEBI:142355"/>
    </ligand>
</feature>
<feature type="binding site" evidence="1 2 8 9 10 12">
    <location>
        <position position="201"/>
    </location>
    <ligand>
        <name>a purine D-ribonucleoside</name>
        <dbReference type="ChEBI" id="CHEBI:142355"/>
    </ligand>
</feature>
<feature type="binding site" evidence="1 2 8 9 11 12">
    <location>
        <position position="226"/>
    </location>
    <ligand>
        <name>Zn(2+)</name>
        <dbReference type="ChEBI" id="CHEBI:29105"/>
        <note>catalytic</note>
    </ligand>
</feature>
<feature type="binding site" evidence="1 2 8 9 10 11 12">
    <location>
        <position position="229"/>
    </location>
    <ligand>
        <name>a purine D-ribonucleoside</name>
        <dbReference type="ChEBI" id="CHEBI:142355"/>
    </ligand>
</feature>
<feature type="binding site" evidence="1 2 8 9 11 12">
    <location>
        <position position="253"/>
    </location>
    <ligand>
        <name>a purine D-ribonucleoside</name>
        <dbReference type="ChEBI" id="CHEBI:142355"/>
    </ligand>
</feature>
<feature type="binding site" evidence="1 2 8 9 10 12">
    <location>
        <position position="310"/>
    </location>
    <ligand>
        <name>a purine D-ribonucleoside</name>
        <dbReference type="ChEBI" id="CHEBI:142355"/>
    </ligand>
</feature>
<feature type="binding site" evidence="1 2 8 9 11 12">
    <location>
        <position position="310"/>
    </location>
    <ligand>
        <name>Zn(2+)</name>
        <dbReference type="ChEBI" id="CHEBI:29105"/>
        <note>catalytic</note>
    </ligand>
</feature>
<feature type="site" description="Important for substrate specificity for S-methyl-5'-thioadenosine" evidence="2">
    <location>
        <position position="172"/>
    </location>
</feature>
<feature type="mutagenesis site" description="Loss of S-methyl-5'-thioadenosine deaminase activity. Slight decrease in adenosine deaminase activity." evidence="2">
    <original>D</original>
    <variation>A</variation>
    <location>
        <position position="172"/>
    </location>
</feature>
<feature type="mutagenesis site" description="Loss of S-methyl-5'-thioadenosine deaminase activity. Slight decrease in adenosine deaminase activity." evidence="2">
    <original>D</original>
    <variation>E</variation>
    <location>
        <position position="172"/>
    </location>
</feature>
<feature type="mutagenesis site" description="Loss of S-methyl-5'-thioadenosine deaminase activity. No effect on adenosine deaminase activity." evidence="2">
    <location>
        <position position="172"/>
    </location>
</feature>
<feature type="helix" evidence="13">
    <location>
        <begin position="13"/>
        <end position="18"/>
    </location>
</feature>
<feature type="helix" evidence="13">
    <location>
        <begin position="21"/>
        <end position="23"/>
    </location>
</feature>
<feature type="helix" evidence="13">
    <location>
        <begin position="26"/>
        <end position="35"/>
    </location>
</feature>
<feature type="strand" evidence="13">
    <location>
        <begin position="38"/>
        <end position="44"/>
    </location>
</feature>
<feature type="helix" evidence="13">
    <location>
        <begin position="45"/>
        <end position="47"/>
    </location>
</feature>
<feature type="helix" evidence="13">
    <location>
        <begin position="51"/>
        <end position="60"/>
    </location>
</feature>
<feature type="helix" evidence="13">
    <location>
        <begin position="69"/>
        <end position="76"/>
    </location>
</feature>
<feature type="helix" evidence="13">
    <location>
        <begin position="85"/>
        <end position="95"/>
    </location>
</feature>
<feature type="helix" evidence="13">
    <location>
        <begin position="96"/>
        <end position="98"/>
    </location>
</feature>
<feature type="helix" evidence="13">
    <location>
        <begin position="102"/>
        <end position="119"/>
    </location>
</feature>
<feature type="strand" evidence="13">
    <location>
        <begin position="121"/>
        <end position="128"/>
    </location>
</feature>
<feature type="helix" evidence="13">
    <location>
        <begin position="130"/>
        <end position="134"/>
    </location>
</feature>
<feature type="turn" evidence="13">
    <location>
        <begin position="135"/>
        <end position="138"/>
    </location>
</feature>
<feature type="helix" evidence="13">
    <location>
        <begin position="141"/>
        <end position="158"/>
    </location>
</feature>
<feature type="turn" evidence="13">
    <location>
        <begin position="159"/>
        <end position="161"/>
    </location>
</feature>
<feature type="strand" evidence="13">
    <location>
        <begin position="162"/>
        <end position="175"/>
    </location>
</feature>
<feature type="helix" evidence="13">
    <location>
        <begin position="180"/>
        <end position="189"/>
    </location>
</feature>
<feature type="turn" evidence="13">
    <location>
        <begin position="190"/>
        <end position="193"/>
    </location>
</feature>
<feature type="strand" evidence="13">
    <location>
        <begin position="194"/>
        <end position="202"/>
    </location>
</feature>
<feature type="helix" evidence="13">
    <location>
        <begin position="206"/>
        <end position="209"/>
    </location>
</feature>
<feature type="helix" evidence="13">
    <location>
        <begin position="210"/>
        <end position="218"/>
    </location>
</feature>
<feature type="strand" evidence="13">
    <location>
        <begin position="223"/>
        <end position="228"/>
    </location>
</feature>
<feature type="strand" evidence="13">
    <location>
        <begin position="233"/>
        <end position="236"/>
    </location>
</feature>
<feature type="helix" evidence="13">
    <location>
        <begin position="237"/>
        <end position="244"/>
    </location>
</feature>
<feature type="strand" evidence="13">
    <location>
        <begin position="249"/>
        <end position="253"/>
    </location>
</feature>
<feature type="helix" evidence="13">
    <location>
        <begin position="255"/>
        <end position="259"/>
    </location>
</feature>
<feature type="helix" evidence="13">
    <location>
        <begin position="261"/>
        <end position="269"/>
    </location>
</feature>
<feature type="strand" evidence="13">
    <location>
        <begin position="273"/>
        <end position="276"/>
    </location>
</feature>
<feature type="helix" evidence="13">
    <location>
        <begin position="278"/>
        <end position="283"/>
    </location>
</feature>
<feature type="strand" evidence="13">
    <location>
        <begin position="286"/>
        <end position="288"/>
    </location>
</feature>
<feature type="helix" evidence="13">
    <location>
        <begin position="290"/>
        <end position="292"/>
    </location>
</feature>
<feature type="helix" evidence="13">
    <location>
        <begin position="295"/>
        <end position="300"/>
    </location>
</feature>
<feature type="strand" evidence="13">
    <location>
        <begin position="304"/>
        <end position="307"/>
    </location>
</feature>
<feature type="helix" evidence="13">
    <location>
        <begin position="312"/>
        <end position="315"/>
    </location>
</feature>
<feature type="helix" evidence="13">
    <location>
        <begin position="319"/>
        <end position="330"/>
    </location>
</feature>
<feature type="helix" evidence="13">
    <location>
        <begin position="334"/>
        <end position="347"/>
    </location>
</feature>
<feature type="helix" evidence="13">
    <location>
        <begin position="352"/>
        <end position="362"/>
    </location>
</feature>
<protein>
    <recommendedName>
        <fullName evidence="3">Adenosine deaminase</fullName>
        <ecNumber evidence="2">3.5.4.4</ecNumber>
    </recommendedName>
    <alternativeName>
        <fullName evidence="3">S-methyl-5'-thioadenosine deaminase</fullName>
        <ecNumber evidence="2">3.5.4.31</ecNumber>
    </alternativeName>
</protein>
<comment type="function">
    <text evidence="2">Catalyzes the hydrolytic deamination of adenosine to produce inosine (PubMed:19728741). Unlike mammalian adenosine deaminases, also catalyzes the deamination of 5'-methylthioadenosine (MTA), a by-product of polyamine biosynthesis, to produce 5'-methylthioinosine (MTI) (PubMed:19728741). Plays an essential role in the purine salvage pathway which allows the parasite to use host cell purines for the synthesis of nucleic acids (PubMed:19728741).</text>
</comment>
<comment type="catalytic activity">
    <reaction evidence="2">
        <text>adenosine + H2O + H(+) = inosine + NH4(+)</text>
        <dbReference type="Rhea" id="RHEA:24408"/>
        <dbReference type="ChEBI" id="CHEBI:15377"/>
        <dbReference type="ChEBI" id="CHEBI:15378"/>
        <dbReference type="ChEBI" id="CHEBI:16335"/>
        <dbReference type="ChEBI" id="CHEBI:17596"/>
        <dbReference type="ChEBI" id="CHEBI:28938"/>
        <dbReference type="EC" id="3.5.4.4"/>
    </reaction>
</comment>
<comment type="catalytic activity">
    <reaction evidence="2">
        <text>S-methyl-5'-thioadenosine + H2O + H(+) = S-methyl-5'-thioinosine + NH4(+)</text>
        <dbReference type="Rhea" id="RHEA:25025"/>
        <dbReference type="ChEBI" id="CHEBI:15377"/>
        <dbReference type="ChEBI" id="CHEBI:15378"/>
        <dbReference type="ChEBI" id="CHEBI:17509"/>
        <dbReference type="ChEBI" id="CHEBI:28938"/>
        <dbReference type="ChEBI" id="CHEBI:48595"/>
        <dbReference type="EC" id="3.5.4.31"/>
    </reaction>
</comment>
<comment type="cofactor">
    <cofactor evidence="4 5">
        <name>Zn(2+)</name>
        <dbReference type="ChEBI" id="CHEBI:29105"/>
    </cofactor>
    <text evidence="1 2">Binds 1 zinc ion per subunit.</text>
</comment>
<comment type="activity regulation">
    <text evidence="2">Inhibited by coformycin and methylthiocoformycin (MT-coformycin).</text>
</comment>
<comment type="biophysicochemical properties">
    <kinetics>
        <KM evidence="2">60 uM for adenosine (at pH 8)</KM>
        <KM evidence="2">9.5 uM for 5'-methylthioadenosine (MTA) (at pH 8)</KM>
        <text evidence="2">kcat is 1.8 sec(-1) with adenosine as substrate (PubMed:19728741). kcat is 0.13 sec(-1) with 5'-methylthioadenosine as substrate (PubMed:19728741).</text>
    </kinetics>
</comment>
<comment type="pathway">
    <text evidence="2">Purine metabolism; purine nucleoside salvage.</text>
</comment>
<comment type="similarity">
    <text evidence="3">Belongs to the metallo-dependent hydrolases superfamily. Adenosine and AMP deaminases family.</text>
</comment>
<accession>A5KE01</accession>
<reference evidence="7" key="1">
    <citation type="journal article" date="2008" name="Nature">
        <title>Comparative genomics of the neglected human malaria parasite Plasmodium vivax.</title>
        <authorList>
            <person name="Carlton J.M."/>
            <person name="Adams J.H."/>
            <person name="Silva J.C."/>
            <person name="Bidwell S.L."/>
            <person name="Lorenzi H."/>
            <person name="Caler E."/>
            <person name="Crabtree J."/>
            <person name="Angiuoli S.V."/>
            <person name="Merino E.F."/>
            <person name="Amedeo P."/>
            <person name="Cheng Q."/>
            <person name="Coulson R.M.R."/>
            <person name="Crabb B.S."/>
            <person name="del Portillo H.A."/>
            <person name="Essien K."/>
            <person name="Feldblyum T.V."/>
            <person name="Fernandez-Becerra C."/>
            <person name="Gilson P.R."/>
            <person name="Gueye A.H."/>
            <person name="Guo X."/>
            <person name="Kang'a S."/>
            <person name="Kooij T.W.A."/>
            <person name="Korsinczky M."/>
            <person name="Meyer E.V.-S."/>
            <person name="Nene V."/>
            <person name="Paulsen I."/>
            <person name="White O."/>
            <person name="Ralph S.A."/>
            <person name="Ren Q."/>
            <person name="Sargeant T.J."/>
            <person name="Salzberg S.L."/>
            <person name="Stoeckert C.J."/>
            <person name="Sullivan S.A."/>
            <person name="Yamamoto M.M."/>
            <person name="Hoffman S.L."/>
            <person name="Wortman J.R."/>
            <person name="Gardner M.J."/>
            <person name="Galinski M.R."/>
            <person name="Barnwell J.W."/>
            <person name="Fraser-Liggett C.M."/>
        </authorList>
    </citation>
    <scope>NUCLEOTIDE SEQUENCE [LARGE SCALE GENOMIC DNA]</scope>
    <source>
        <strain evidence="7">Salvador I</strain>
    </source>
</reference>
<reference evidence="8 9 10" key="2">
    <citation type="journal article" date="2008" name="J. Mol. Biol.">
        <title>Structures of substrate- and inhibitor-bound adenosine deaminase from a human malaria parasite show a dramatic conformational change and shed light on drug selectivity.</title>
        <authorList>
            <person name="Larson E.T."/>
            <person name="Deng W."/>
            <person name="Krumm B.E."/>
            <person name="Napuli A."/>
            <person name="Mueller N."/>
            <person name="Van Voorhis W.C."/>
            <person name="Buckner F.S."/>
            <person name="Fan E."/>
            <person name="Lauricella A."/>
            <person name="DeTitta G."/>
            <person name="Luft J."/>
            <person name="Zucker F."/>
            <person name="Hol W.G."/>
            <person name="Verlinde C.L."/>
            <person name="Merritt E.A."/>
        </authorList>
    </citation>
    <scope>X-RAY CRYSTALLOGRAPHY (1.89 ANGSTROMS) IN COMPLEX WITH ZINC; ADENOSINE; GUANOSINE AND INHIBITOR PENTOSTATIN</scope>
</reference>
<reference evidence="11 12" key="3">
    <citation type="journal article" date="2009" name="Biochemistry">
        <title>Structural and metabolic specificity of methylthiocoformycin for malarial adenosine deaminases.</title>
        <authorList>
            <person name="Ho M.C."/>
            <person name="Cassera M.B."/>
            <person name="Madrid D.C."/>
            <person name="Ting L.M."/>
            <person name="Tyler P.C."/>
            <person name="Kim K."/>
            <person name="Almo S.C."/>
            <person name="Schramm V.L."/>
        </authorList>
    </citation>
    <scope>X-RAY CRYSTALLOGRAPHY (1.90 ANGSTROMS) OF MUTANT ASP-172 DEL IN COMPLEX WITH ZINC AND INHIBITOR METHYLTHIOCOFORMYCIN</scope>
    <scope>FUNCTION</scope>
    <scope>CATALYTIC ACTIVITY</scope>
    <scope>ACTIVITY REGULATION</scope>
    <scope>BIOPHYSICOCHEMICAL PROPERTIES</scope>
    <scope>PATHWAY</scope>
    <scope>MUTAGENESIS OF ASP-172</scope>
</reference>